<dbReference type="EC" id="5.3.1.9" evidence="2"/>
<dbReference type="EMBL" id="DAAA02046903">
    <property type="status" value="NOT_ANNOTATED_CDS"/>
    <property type="molecule type" value="Genomic_DNA"/>
</dbReference>
<dbReference type="EMBL" id="BC103416">
    <property type="protein sequence ID" value="AAI03417.1"/>
    <property type="molecule type" value="mRNA"/>
</dbReference>
<dbReference type="EMBL" id="AF043228">
    <property type="protein sequence ID" value="AAB97860.1"/>
    <property type="molecule type" value="mRNA"/>
</dbReference>
<dbReference type="RefSeq" id="NP_001035561.1">
    <property type="nucleotide sequence ID" value="NM_001040471.1"/>
</dbReference>
<dbReference type="SMR" id="Q3ZBD7"/>
<dbReference type="FunCoup" id="Q3ZBD7">
    <property type="interactions" value="1955"/>
</dbReference>
<dbReference type="STRING" id="9913.ENSBTAP00000073190"/>
<dbReference type="PaxDb" id="9913-ENSBTAP00000008386"/>
<dbReference type="PeptideAtlas" id="Q3ZBD7"/>
<dbReference type="GeneID" id="280808"/>
<dbReference type="KEGG" id="bta:280808"/>
<dbReference type="CTD" id="2821"/>
<dbReference type="VEuPathDB" id="HostDB:ENSBTAG00000006396"/>
<dbReference type="eggNOG" id="KOG2446">
    <property type="taxonomic scope" value="Eukaryota"/>
</dbReference>
<dbReference type="HOGENOM" id="CLU_017947_3_0_1"/>
<dbReference type="InParanoid" id="Q3ZBD7"/>
<dbReference type="OrthoDB" id="5831190at2759"/>
<dbReference type="TreeFam" id="TF300436"/>
<dbReference type="Reactome" id="R-BTA-5628897">
    <property type="pathway name" value="TP53 Regulates Metabolic Genes"/>
</dbReference>
<dbReference type="Reactome" id="R-BTA-6798695">
    <property type="pathway name" value="Neutrophil degranulation"/>
</dbReference>
<dbReference type="Reactome" id="R-BTA-70171">
    <property type="pathway name" value="Glycolysis"/>
</dbReference>
<dbReference type="Reactome" id="R-BTA-70263">
    <property type="pathway name" value="Gluconeogenesis"/>
</dbReference>
<dbReference type="SABIO-RK" id="Q3ZBD7"/>
<dbReference type="UniPathway" id="UPA00109">
    <property type="reaction ID" value="UER00181"/>
</dbReference>
<dbReference type="Proteomes" id="UP000009136">
    <property type="component" value="Chromosome 18"/>
</dbReference>
<dbReference type="Bgee" id="ENSBTAG00000006396">
    <property type="expression patterns" value="Expressed in retina and 106 other cell types or tissues"/>
</dbReference>
<dbReference type="GO" id="GO:0005829">
    <property type="term" value="C:cytosol"/>
    <property type="evidence" value="ECO:0000318"/>
    <property type="project" value="GO_Central"/>
</dbReference>
<dbReference type="GO" id="GO:0005615">
    <property type="term" value="C:extracellular space"/>
    <property type="evidence" value="ECO:0007669"/>
    <property type="project" value="UniProtKB-KW"/>
</dbReference>
<dbReference type="GO" id="GO:0097367">
    <property type="term" value="F:carbohydrate derivative binding"/>
    <property type="evidence" value="ECO:0007669"/>
    <property type="project" value="InterPro"/>
</dbReference>
<dbReference type="GO" id="GO:0005125">
    <property type="term" value="F:cytokine activity"/>
    <property type="evidence" value="ECO:0007669"/>
    <property type="project" value="UniProtKB-KW"/>
</dbReference>
<dbReference type="GO" id="GO:0004347">
    <property type="term" value="F:glucose-6-phosphate isomerase activity"/>
    <property type="evidence" value="ECO:0000250"/>
    <property type="project" value="UniProtKB"/>
</dbReference>
<dbReference type="GO" id="GO:0048029">
    <property type="term" value="F:monosaccharide binding"/>
    <property type="evidence" value="ECO:0000318"/>
    <property type="project" value="GO_Central"/>
</dbReference>
<dbReference type="GO" id="GO:0006094">
    <property type="term" value="P:gluconeogenesis"/>
    <property type="evidence" value="ECO:0000318"/>
    <property type="project" value="GO_Central"/>
</dbReference>
<dbReference type="GO" id="GO:0051156">
    <property type="term" value="P:glucose 6-phosphate metabolic process"/>
    <property type="evidence" value="ECO:0000250"/>
    <property type="project" value="UniProtKB"/>
</dbReference>
<dbReference type="GO" id="GO:0006096">
    <property type="term" value="P:glycolytic process"/>
    <property type="evidence" value="ECO:0000318"/>
    <property type="project" value="GO_Central"/>
</dbReference>
<dbReference type="CDD" id="cd05015">
    <property type="entry name" value="SIS_PGI_1"/>
    <property type="match status" value="1"/>
</dbReference>
<dbReference type="CDD" id="cd05016">
    <property type="entry name" value="SIS_PGI_2"/>
    <property type="match status" value="1"/>
</dbReference>
<dbReference type="FunFam" id="1.10.1390.10:FF:000001">
    <property type="entry name" value="Glucose-6-phosphate isomerase"/>
    <property type="match status" value="1"/>
</dbReference>
<dbReference type="FunFam" id="3.40.50.10490:FF:000004">
    <property type="entry name" value="Glucose-6-phosphate isomerase"/>
    <property type="match status" value="1"/>
</dbReference>
<dbReference type="FunFam" id="3.40.50.10490:FF:000093">
    <property type="entry name" value="Glucose-6-phosphate isomerase"/>
    <property type="match status" value="1"/>
</dbReference>
<dbReference type="Gene3D" id="1.10.1390.10">
    <property type="match status" value="1"/>
</dbReference>
<dbReference type="Gene3D" id="3.40.50.10490">
    <property type="entry name" value="Glucose-6-phosphate isomerase like protein, domain 1"/>
    <property type="match status" value="2"/>
</dbReference>
<dbReference type="HAMAP" id="MF_00473">
    <property type="entry name" value="G6P_isomerase"/>
    <property type="match status" value="1"/>
</dbReference>
<dbReference type="InterPro" id="IPR001672">
    <property type="entry name" value="G6P_Isomerase"/>
</dbReference>
<dbReference type="InterPro" id="IPR023096">
    <property type="entry name" value="G6P_Isomerase_C"/>
</dbReference>
<dbReference type="InterPro" id="IPR018189">
    <property type="entry name" value="Phosphoglucose_isomerase_CS"/>
</dbReference>
<dbReference type="InterPro" id="IPR046348">
    <property type="entry name" value="SIS_dom_sf"/>
</dbReference>
<dbReference type="InterPro" id="IPR035476">
    <property type="entry name" value="SIS_PGI_1"/>
</dbReference>
<dbReference type="InterPro" id="IPR035482">
    <property type="entry name" value="SIS_PGI_2"/>
</dbReference>
<dbReference type="NCBIfam" id="NF001211">
    <property type="entry name" value="PRK00179.1"/>
    <property type="match status" value="1"/>
</dbReference>
<dbReference type="PANTHER" id="PTHR11469">
    <property type="entry name" value="GLUCOSE-6-PHOSPHATE ISOMERASE"/>
    <property type="match status" value="1"/>
</dbReference>
<dbReference type="PANTHER" id="PTHR11469:SF1">
    <property type="entry name" value="GLUCOSE-6-PHOSPHATE ISOMERASE"/>
    <property type="match status" value="1"/>
</dbReference>
<dbReference type="Pfam" id="PF00342">
    <property type="entry name" value="PGI"/>
    <property type="match status" value="1"/>
</dbReference>
<dbReference type="PRINTS" id="PR00662">
    <property type="entry name" value="G6PISOMERASE"/>
</dbReference>
<dbReference type="SUPFAM" id="SSF53697">
    <property type="entry name" value="SIS domain"/>
    <property type="match status" value="1"/>
</dbReference>
<dbReference type="PROSITE" id="PS00765">
    <property type="entry name" value="P_GLUCOSE_ISOMERASE_1"/>
    <property type="match status" value="1"/>
</dbReference>
<dbReference type="PROSITE" id="PS00174">
    <property type="entry name" value="P_GLUCOSE_ISOMERASE_2"/>
    <property type="match status" value="1"/>
</dbReference>
<dbReference type="PROSITE" id="PS51463">
    <property type="entry name" value="P_GLUCOSE_ISOMERASE_3"/>
    <property type="match status" value="1"/>
</dbReference>
<gene>
    <name evidence="1" type="primary">GPI</name>
</gene>
<name>G6PI_BOVIN</name>
<organism>
    <name type="scientific">Bos taurus</name>
    <name type="common">Bovine</name>
    <dbReference type="NCBI Taxonomy" id="9913"/>
    <lineage>
        <taxon>Eukaryota</taxon>
        <taxon>Metazoa</taxon>
        <taxon>Chordata</taxon>
        <taxon>Craniata</taxon>
        <taxon>Vertebrata</taxon>
        <taxon>Euteleostomi</taxon>
        <taxon>Mammalia</taxon>
        <taxon>Eutheria</taxon>
        <taxon>Laurasiatheria</taxon>
        <taxon>Artiodactyla</taxon>
        <taxon>Ruminantia</taxon>
        <taxon>Pecora</taxon>
        <taxon>Bovidae</taxon>
        <taxon>Bovinae</taxon>
        <taxon>Bos</taxon>
    </lineage>
</organism>
<reference key="1">
    <citation type="journal article" date="2009" name="Genome Biol.">
        <title>A whole-genome assembly of the domestic cow, Bos taurus.</title>
        <authorList>
            <person name="Zimin A.V."/>
            <person name="Delcher A.L."/>
            <person name="Florea L."/>
            <person name="Kelley D.R."/>
            <person name="Schatz M.C."/>
            <person name="Puiu D."/>
            <person name="Hanrahan F."/>
            <person name="Pertea G."/>
            <person name="Van Tassell C.P."/>
            <person name="Sonstegard T.S."/>
            <person name="Marcais G."/>
            <person name="Roberts M."/>
            <person name="Subramanian P."/>
            <person name="Yorke J.A."/>
            <person name="Salzberg S.L."/>
        </authorList>
    </citation>
    <scope>NUCLEOTIDE SEQUENCE [LARGE SCALE GENOMIC DNA]</scope>
    <source>
        <strain>Hereford</strain>
    </source>
</reference>
<reference key="2">
    <citation type="submission" date="2005-08" db="EMBL/GenBank/DDBJ databases">
        <authorList>
            <consortium name="NIH - Mammalian Gene Collection (MGC) project"/>
        </authorList>
    </citation>
    <scope>NUCLEOTIDE SEQUENCE [LARGE SCALE MRNA]</scope>
    <source>
        <strain>Crossbred X Angus</strain>
        <tissue>Ileum</tissue>
    </source>
</reference>
<reference key="3">
    <citation type="submission" date="1998-01" db="EMBL/GenBank/DDBJ databases">
        <authorList>
            <person name="Savadye D.T."/>
        </authorList>
    </citation>
    <scope>NUCLEOTIDE SEQUENCE [MRNA] OF 232-316</scope>
</reference>
<proteinExistence type="evidence at transcript level"/>
<protein>
    <recommendedName>
        <fullName evidence="1">Glucose-6-phosphate isomerase</fullName>
        <shortName evidence="1">GPI</shortName>
        <ecNumber evidence="2">5.3.1.9</ecNumber>
    </recommendedName>
    <alternativeName>
        <fullName evidence="1">Autocrine motility factor</fullName>
        <shortName evidence="1">AMF</shortName>
    </alternativeName>
    <alternativeName>
        <fullName evidence="1">Neuroleukin</fullName>
        <shortName evidence="1">NLK</shortName>
    </alternativeName>
    <alternativeName>
        <fullName evidence="1">Phosphoglucose isomerase</fullName>
        <shortName evidence="1">PGI</shortName>
    </alternativeName>
    <alternativeName>
        <fullName>Phosphohexose isomerase</fullName>
        <shortName evidence="1">PHI</shortName>
    </alternativeName>
</protein>
<accession>Q3ZBD7</accession>
<accession>F1MD19</accession>
<accession>O46595</accession>
<comment type="function">
    <text evidence="1 2">In the cytoplasm, catalyzes the conversion of glucose-6-phosphate to fructose-6-phosphate, the second step in glycolysis, and the reverse reaction during gluconeogenesis (By similarity). Besides it's role as a glycolytic enzyme, also acts as a secreted cytokine: acts as an angiogenic factor (AMF) that stimulates endothelial cell motility. Acts as a neurotrophic factor, neuroleukin, for spinal and sensory neurons. It is secreted by lectin-stimulated T-cells and induces immunoglobulin secretion (By similarity).</text>
</comment>
<comment type="catalytic activity">
    <reaction evidence="1">
        <text>alpha-D-glucose 6-phosphate = beta-D-fructose 6-phosphate</text>
        <dbReference type="Rhea" id="RHEA:11816"/>
        <dbReference type="ChEBI" id="CHEBI:57634"/>
        <dbReference type="ChEBI" id="CHEBI:58225"/>
        <dbReference type="EC" id="5.3.1.9"/>
    </reaction>
</comment>
<comment type="pathway">
    <text evidence="1">Carbohydrate degradation; glycolysis; D-glyceraldehyde 3-phosphate and glycerone phosphate from D-glucose: step 2/4.</text>
</comment>
<comment type="subunit">
    <text evidence="1">Homodimer; in the catalytically active form. Monomer in the secreted form.</text>
</comment>
<comment type="subcellular location">
    <subcellularLocation>
        <location evidence="1">Cytoplasm</location>
    </subcellularLocation>
    <subcellularLocation>
        <location evidence="1">Secreted</location>
    </subcellularLocation>
</comment>
<comment type="PTM">
    <text evidence="1">Phosphorylation at Ser-185 by CK2 has been shown to decrease enzymatic activity and may contribute to secretion by a non-classical secretory pathway.</text>
</comment>
<comment type="PTM">
    <text evidence="1">ISGylated.</text>
</comment>
<comment type="similarity">
    <text evidence="4">Belongs to the GPI family.</text>
</comment>
<evidence type="ECO:0000250" key="1">
    <source>
        <dbReference type="UniProtKB" id="P06744"/>
    </source>
</evidence>
<evidence type="ECO:0000250" key="2">
    <source>
        <dbReference type="UniProtKB" id="P06745"/>
    </source>
</evidence>
<evidence type="ECO:0000250" key="3">
    <source>
        <dbReference type="UniProtKB" id="Q6P6V0"/>
    </source>
</evidence>
<evidence type="ECO:0000305" key="4"/>
<sequence>MAALTQNPQFKKLKTWYEQHGSDLNLRRLFEGDRDRFNRFSLNLNTNHGHILVDYSKNLVTETVMQMLVDVAKSRGVEAARERMFTGEKINFTEDRAVLHVALRNRSNAPILVDGKDVMPEVNRVLEKMKSFCQRVRSGEWKGYSGKAITDVINIGIGGSDLGPLMVTEALKPYSSEGPRVWFVSNIDGTHIAKTLATLNPESSLFIIASKTFTTQETITNAETAKEWFLLSAKDPSAVAKHFVALSTNTAKVKEFGIDPQNMFEFWDWVGGRYSLWSAIGLSIALHVGFDNFEQLLSGAHWMDQHFRTTPLEKNAPVLLALLGIWYINCFGCETHAMLPYDQYLHRFAAYFQQGDMESNGKYITKSGTRVNYQTGPIVWGEPGTNGQHAFYQLIHQGTKMIPCDFLIPVQSQHPIRNGLHHKILLANFLAQTEALMRGKSTEEARKELQAAGRSPEDFEKLLPHKVFEGNRPTNSIVFTKLTPFILGALIAMYEHKIFVQGIIWDINSFDQWGVELGKQLAKKIEPELDGSSPVTSHDSSTNGLINFIKQEREARS</sequence>
<keyword id="KW-0007">Acetylation</keyword>
<keyword id="KW-0202">Cytokine</keyword>
<keyword id="KW-0963">Cytoplasm</keyword>
<keyword id="KW-0312">Gluconeogenesis</keyword>
<keyword id="KW-0324">Glycolysis</keyword>
<keyword id="KW-0413">Isomerase</keyword>
<keyword id="KW-0597">Phosphoprotein</keyword>
<keyword id="KW-1185">Reference proteome</keyword>
<keyword id="KW-0964">Secreted</keyword>
<keyword id="KW-0832">Ubl conjugation</keyword>
<feature type="initiator methionine" description="Removed" evidence="1">
    <location>
        <position position="1"/>
    </location>
</feature>
<feature type="chain" id="PRO_0000247641" description="Glucose-6-phosphate isomerase">
    <location>
        <begin position="2"/>
        <end position="557"/>
    </location>
</feature>
<feature type="active site" description="Proton donor" evidence="2">
    <location>
        <position position="358"/>
    </location>
</feature>
<feature type="active site" evidence="2">
    <location>
        <position position="389"/>
    </location>
</feature>
<feature type="active site" evidence="2">
    <location>
        <position position="519"/>
    </location>
</feature>
<feature type="binding site" evidence="2">
    <location>
        <begin position="159"/>
        <end position="160"/>
    </location>
    <ligand>
        <name>D-glucose 6-phosphate</name>
        <dbReference type="ChEBI" id="CHEBI:61548"/>
    </ligand>
</feature>
<feature type="binding site" evidence="2">
    <location>
        <begin position="210"/>
        <end position="215"/>
    </location>
    <ligand>
        <name>D-glucose 6-phosphate</name>
        <dbReference type="ChEBI" id="CHEBI:61548"/>
    </ligand>
</feature>
<feature type="binding site" evidence="2">
    <location>
        <position position="354"/>
    </location>
    <ligand>
        <name>D-glucose 6-phosphate</name>
        <dbReference type="ChEBI" id="CHEBI:61548"/>
    </ligand>
</feature>
<feature type="binding site" evidence="2">
    <location>
        <position position="358"/>
    </location>
    <ligand>
        <name>D-glucose 6-phosphate</name>
        <dbReference type="ChEBI" id="CHEBI:61548"/>
    </ligand>
</feature>
<feature type="binding site" evidence="2">
    <location>
        <position position="389"/>
    </location>
    <ligand>
        <name>D-glucose 6-phosphate</name>
        <dbReference type="ChEBI" id="CHEBI:61548"/>
    </ligand>
</feature>
<feature type="binding site" evidence="2">
    <location>
        <position position="519"/>
    </location>
    <ligand>
        <name>D-glucose 6-phosphate</name>
        <dbReference type="ChEBI" id="CHEBI:61548"/>
    </ligand>
</feature>
<feature type="modified residue" description="N-acetylalanine" evidence="1">
    <location>
        <position position="2"/>
    </location>
</feature>
<feature type="modified residue" description="N6-acetyllysine" evidence="1">
    <location>
        <position position="12"/>
    </location>
</feature>
<feature type="modified residue" description="Phosphoserine" evidence="1">
    <location>
        <position position="107"/>
    </location>
</feature>
<feature type="modified residue" description="N6-acetyllysine" evidence="1">
    <location>
        <position position="142"/>
    </location>
</feature>
<feature type="modified residue" description="Phosphoserine; by CK2" evidence="1">
    <location>
        <position position="185"/>
    </location>
</feature>
<feature type="modified residue" description="Phosphothreonine" evidence="3">
    <location>
        <position position="250"/>
    </location>
</feature>
<feature type="modified residue" description="Phosphoserine" evidence="1">
    <location>
        <position position="455"/>
    </location>
</feature>
<feature type="sequence conflict" description="In Ref. 1; AAI03417." evidence="4" ref="1">
    <original>A</original>
    <variation>S</variation>
    <location>
        <position position="170"/>
    </location>
</feature>
<feature type="sequence conflict" description="In Ref. 3; AAB97860." evidence="4" ref="3">
    <original>L</original>
    <variation>WRRTP</variation>
    <location>
        <position position="312"/>
    </location>
</feature>